<reference key="1">
    <citation type="journal article" date="2003" name="Am. J. Phys. Anthropol.">
        <title>Evolution of a pigmentation gene, the melanocortin-1 receptor, in primates.</title>
        <authorList>
            <person name="Mundy N.I."/>
            <person name="Kelly J."/>
        </authorList>
    </citation>
    <scope>NUCLEOTIDE SEQUENCE [GENOMIC DNA]</scope>
    <source>
        <strain>Isolate 1</strain>
    </source>
</reference>
<feature type="chain" id="PRO_0000069855" description="Melanocyte-stimulating hormone receptor">
    <location>
        <begin position="1"/>
        <end position="317"/>
    </location>
</feature>
<feature type="topological domain" description="Extracellular" evidence="2">
    <location>
        <begin position="1"/>
        <end position="37"/>
    </location>
</feature>
<feature type="transmembrane region" description="Helical; Name=1" evidence="2">
    <location>
        <begin position="38"/>
        <end position="63"/>
    </location>
</feature>
<feature type="topological domain" description="Cytoplasmic" evidence="2">
    <location>
        <begin position="64"/>
        <end position="72"/>
    </location>
</feature>
<feature type="transmembrane region" description="Helical; Name=2" evidence="2">
    <location>
        <begin position="73"/>
        <end position="93"/>
    </location>
</feature>
<feature type="topological domain" description="Extracellular" evidence="2">
    <location>
        <begin position="94"/>
        <end position="118"/>
    </location>
</feature>
<feature type="transmembrane region" description="Helical; Name=3" evidence="2">
    <location>
        <begin position="119"/>
        <end position="140"/>
    </location>
</feature>
<feature type="topological domain" description="Cytoplasmic" evidence="2">
    <location>
        <begin position="141"/>
        <end position="163"/>
    </location>
</feature>
<feature type="transmembrane region" description="Helical; Name=4" evidence="2">
    <location>
        <begin position="164"/>
        <end position="183"/>
    </location>
</feature>
<feature type="topological domain" description="Extracellular" evidence="2">
    <location>
        <begin position="184"/>
        <end position="191"/>
    </location>
</feature>
<feature type="transmembrane region" description="Helical; Name=5" evidence="2">
    <location>
        <begin position="192"/>
        <end position="211"/>
    </location>
</feature>
<feature type="topological domain" description="Cytoplasmic" evidence="2">
    <location>
        <begin position="212"/>
        <end position="240"/>
    </location>
</feature>
<feature type="transmembrane region" description="Helical; Name=6" evidence="2">
    <location>
        <begin position="241"/>
        <end position="266"/>
    </location>
</feature>
<feature type="topological domain" description="Extracellular" evidence="2">
    <location>
        <begin position="267"/>
        <end position="279"/>
    </location>
</feature>
<feature type="transmembrane region" description="Helical; Name=7" evidence="2">
    <location>
        <begin position="280"/>
        <end position="300"/>
    </location>
</feature>
<feature type="topological domain" description="Cytoplasmic" evidence="2">
    <location>
        <begin position="301"/>
        <end position="317"/>
    </location>
</feature>
<feature type="lipid moiety-binding region" description="S-palmitoyl cysteine" evidence="2">
    <location>
        <position position="315"/>
    </location>
</feature>
<feature type="glycosylation site" description="N-linked (GlcNAc...) asparagine" evidence="2">
    <location>
        <position position="29"/>
    </location>
</feature>
<gene>
    <name type="primary">MC1R</name>
</gene>
<keyword id="KW-1003">Cell membrane</keyword>
<keyword id="KW-0297">G-protein coupled receptor</keyword>
<keyword id="KW-0325">Glycoprotein</keyword>
<keyword id="KW-0449">Lipoprotein</keyword>
<keyword id="KW-0472">Membrane</keyword>
<keyword id="KW-0564">Palmitate</keyword>
<keyword id="KW-0675">Receptor</keyword>
<keyword id="KW-0807">Transducer</keyword>
<keyword id="KW-0812">Transmembrane</keyword>
<keyword id="KW-1133">Transmembrane helix</keyword>
<comment type="function">
    <text evidence="1">Receptor for MSH (alpha, beta and gamma) and ACTH. The activity of this receptor is mediated by G proteins which activate adenylate cyclase. Mediates melanogenesis, the production of eumelanin (black/brown) and phaeomelanin (red/yellow), via regulation of cAMP signaling in melanocytes.</text>
</comment>
<comment type="subunit">
    <text evidence="1">Interacts with MGRN1, but does not undergo MGRN1-mediated ubiquitination; this interaction competes with GNAS-binding and thus inhibits agonist-induced cAMP production. Interacts with OPN3; the interaction results in a decrease in MC1R-mediated cAMP signaling and ultimately a decrease in melanin production in melanocytes.</text>
</comment>
<comment type="subcellular location">
    <subcellularLocation>
        <location evidence="1">Cell membrane</location>
        <topology evidence="2">Multi-pass membrane protein</topology>
    </subcellularLocation>
</comment>
<comment type="similarity">
    <text evidence="3">Belongs to the G-protein coupled receptor 1 family.</text>
</comment>
<accession>Q864I5</accession>
<name>MSHR_TRAOB</name>
<dbReference type="EMBL" id="AY205112">
    <property type="protein sequence ID" value="AAP30986.1"/>
    <property type="molecule type" value="Genomic_DNA"/>
</dbReference>
<dbReference type="SMR" id="Q864I5"/>
<dbReference type="GlyCosmos" id="Q864I5">
    <property type="glycosylation" value="1 site, No reported glycans"/>
</dbReference>
<dbReference type="GO" id="GO:0005886">
    <property type="term" value="C:plasma membrane"/>
    <property type="evidence" value="ECO:0000250"/>
    <property type="project" value="UniProtKB"/>
</dbReference>
<dbReference type="GO" id="GO:0004980">
    <property type="term" value="F:melanocyte-stimulating hormone receptor activity"/>
    <property type="evidence" value="ECO:0007669"/>
    <property type="project" value="InterPro"/>
</dbReference>
<dbReference type="GO" id="GO:0007189">
    <property type="term" value="P:adenylate cyclase-activating G protein-coupled receptor signaling pathway"/>
    <property type="evidence" value="ECO:0007669"/>
    <property type="project" value="UniProtKB-ARBA"/>
</dbReference>
<dbReference type="FunFam" id="1.20.1070.10:FF:000211">
    <property type="entry name" value="Melanocyte-stimulating hormone receptor"/>
    <property type="match status" value="1"/>
</dbReference>
<dbReference type="Gene3D" id="1.20.1070.10">
    <property type="entry name" value="Rhodopsin 7-helix transmembrane proteins"/>
    <property type="match status" value="1"/>
</dbReference>
<dbReference type="InterPro" id="IPR000276">
    <property type="entry name" value="GPCR_Rhodpsn"/>
</dbReference>
<dbReference type="InterPro" id="IPR017452">
    <property type="entry name" value="GPCR_Rhodpsn_7TM"/>
</dbReference>
<dbReference type="InterPro" id="IPR001671">
    <property type="entry name" value="Melcrt_ACTH_rcpt"/>
</dbReference>
<dbReference type="InterPro" id="IPR000761">
    <property type="entry name" value="MSH_rcpt"/>
</dbReference>
<dbReference type="PANTHER" id="PTHR22750">
    <property type="entry name" value="G-PROTEIN COUPLED RECEPTOR"/>
    <property type="match status" value="1"/>
</dbReference>
<dbReference type="Pfam" id="PF00001">
    <property type="entry name" value="7tm_1"/>
    <property type="match status" value="2"/>
</dbReference>
<dbReference type="PRINTS" id="PR00237">
    <property type="entry name" value="GPCRRHODOPSN"/>
</dbReference>
<dbReference type="PRINTS" id="PR00534">
    <property type="entry name" value="MCRFAMILY"/>
</dbReference>
<dbReference type="PRINTS" id="PR00536">
    <property type="entry name" value="MELNOCYTESHR"/>
</dbReference>
<dbReference type="SMART" id="SM01381">
    <property type="entry name" value="7TM_GPCR_Srsx"/>
    <property type="match status" value="1"/>
</dbReference>
<dbReference type="SUPFAM" id="SSF81321">
    <property type="entry name" value="Family A G protein-coupled receptor-like"/>
    <property type="match status" value="1"/>
</dbReference>
<dbReference type="PROSITE" id="PS00237">
    <property type="entry name" value="G_PROTEIN_RECEP_F1_1"/>
    <property type="match status" value="1"/>
</dbReference>
<dbReference type="PROSITE" id="PS50262">
    <property type="entry name" value="G_PROTEIN_RECEP_F1_2"/>
    <property type="match status" value="1"/>
</dbReference>
<organism>
    <name type="scientific">Trachypithecus obscurus</name>
    <name type="common">Dusky leaf-monkey</name>
    <name type="synonym">Presbytis obscura</name>
    <dbReference type="NCBI Taxonomy" id="54181"/>
    <lineage>
        <taxon>Eukaryota</taxon>
        <taxon>Metazoa</taxon>
        <taxon>Chordata</taxon>
        <taxon>Craniata</taxon>
        <taxon>Vertebrata</taxon>
        <taxon>Euteleostomi</taxon>
        <taxon>Mammalia</taxon>
        <taxon>Eutheria</taxon>
        <taxon>Euarchontoglires</taxon>
        <taxon>Primates</taxon>
        <taxon>Haplorrhini</taxon>
        <taxon>Catarrhini</taxon>
        <taxon>Cercopithecidae</taxon>
        <taxon>Colobinae</taxon>
        <taxon>Trachypithecus</taxon>
    </lineage>
</organism>
<sequence length="317" mass="34806">MPVQGSQRRLLGSLNSTPTATPRLGLAANQTGARCLEVSIPDGLFLSLGLVSLVENVLVVVAIARNRNLHSPMYCFICCLALSDLLVSGSNMLETAVFLLLEAGALAARAAVVQQLDNVIDVITCSSMLSSLCFLGAIAVDRYISIFYALRYHSIVTLRRARRVVAAIWVASVLFSTLFIAYCDHAAVLLCLVVFFLAMLVLMAVLYVHMLARACQHAQGIAQLHKRQRPAHQGVGLKGAATLTILLGIFFLCWGPFFLHLTLIVLCPQHPTCSCIFKNFNLFLTLIICNAIIDPLIYAFRSQELRRTLKKVLLCSW</sequence>
<evidence type="ECO:0000250" key="1">
    <source>
        <dbReference type="UniProtKB" id="Q01726"/>
    </source>
</evidence>
<evidence type="ECO:0000255" key="2"/>
<evidence type="ECO:0000255" key="3">
    <source>
        <dbReference type="PROSITE-ProRule" id="PRU00521"/>
    </source>
</evidence>
<protein>
    <recommendedName>
        <fullName>Melanocyte-stimulating hormone receptor</fullName>
        <shortName>MSH-R</shortName>
    </recommendedName>
    <alternativeName>
        <fullName>Melanocortin receptor 1</fullName>
        <shortName>MC1-R</shortName>
    </alternativeName>
</protein>
<proteinExistence type="inferred from homology"/>